<keyword id="KW-0007">Acetylation</keyword>
<keyword id="KW-0687">Ribonucleoprotein</keyword>
<keyword id="KW-0689">Ribosomal protein</keyword>
<keyword id="KW-0694">RNA-binding</keyword>
<keyword id="KW-0699">rRNA-binding</keyword>
<reference key="1">
    <citation type="journal article" date="2001" name="Nature">
        <title>Complete genome sequence of a multiple drug resistant Salmonella enterica serovar Typhi CT18.</title>
        <authorList>
            <person name="Parkhill J."/>
            <person name="Dougan G."/>
            <person name="James K.D."/>
            <person name="Thomson N.R."/>
            <person name="Pickard D."/>
            <person name="Wain J."/>
            <person name="Churcher C.M."/>
            <person name="Mungall K.L."/>
            <person name="Bentley S.D."/>
            <person name="Holden M.T.G."/>
            <person name="Sebaihia M."/>
            <person name="Baker S."/>
            <person name="Basham D."/>
            <person name="Brooks K."/>
            <person name="Chillingworth T."/>
            <person name="Connerton P."/>
            <person name="Cronin A."/>
            <person name="Davis P."/>
            <person name="Davies R.M."/>
            <person name="Dowd L."/>
            <person name="White N."/>
            <person name="Farrar J."/>
            <person name="Feltwell T."/>
            <person name="Hamlin N."/>
            <person name="Haque A."/>
            <person name="Hien T.T."/>
            <person name="Holroyd S."/>
            <person name="Jagels K."/>
            <person name="Krogh A."/>
            <person name="Larsen T.S."/>
            <person name="Leather S."/>
            <person name="Moule S."/>
            <person name="O'Gaora P."/>
            <person name="Parry C."/>
            <person name="Quail M.A."/>
            <person name="Rutherford K.M."/>
            <person name="Simmonds M."/>
            <person name="Skelton J."/>
            <person name="Stevens K."/>
            <person name="Whitehead S."/>
            <person name="Barrell B.G."/>
        </authorList>
    </citation>
    <scope>NUCLEOTIDE SEQUENCE [LARGE SCALE GENOMIC DNA]</scope>
    <source>
        <strain>CT18</strain>
    </source>
</reference>
<reference key="2">
    <citation type="journal article" date="2003" name="J. Bacteriol.">
        <title>Comparative genomics of Salmonella enterica serovar Typhi strains Ty2 and CT18.</title>
        <authorList>
            <person name="Deng W."/>
            <person name="Liou S.-R."/>
            <person name="Plunkett G. III"/>
            <person name="Mayhew G.F."/>
            <person name="Rose D.J."/>
            <person name="Burland V."/>
            <person name="Kodoyianni V."/>
            <person name="Schwartz D.C."/>
            <person name="Blattner F.R."/>
        </authorList>
    </citation>
    <scope>NUCLEOTIDE SEQUENCE [LARGE SCALE GENOMIC DNA]</scope>
    <source>
        <strain>ATCC 700931 / Ty2</strain>
    </source>
</reference>
<comment type="function">
    <text evidence="2">Binds as a heterodimer with protein bS6 to the central domain of the 16S rRNA, where it helps stabilize the platform of the 30S subunit.</text>
</comment>
<comment type="subunit">
    <text evidence="2">Part of the 30S ribosomal subunit. Forms a tight heterodimer with protein bS6.</text>
</comment>
<comment type="similarity">
    <text evidence="3">Belongs to the bacterial ribosomal protein bS18 family.</text>
</comment>
<evidence type="ECO:0000250" key="1"/>
<evidence type="ECO:0000255" key="2">
    <source>
        <dbReference type="HAMAP-Rule" id="MF_00270"/>
    </source>
</evidence>
<evidence type="ECO:0000305" key="3"/>
<protein>
    <recommendedName>
        <fullName evidence="3">Small ribosomal subunit protein bS18</fullName>
    </recommendedName>
    <alternativeName>
        <fullName>30S ribosomal protein S18</fullName>
    </alternativeName>
</protein>
<name>RS18_SALTI</name>
<organism>
    <name type="scientific">Salmonella typhi</name>
    <dbReference type="NCBI Taxonomy" id="90370"/>
    <lineage>
        <taxon>Bacteria</taxon>
        <taxon>Pseudomonadati</taxon>
        <taxon>Pseudomonadota</taxon>
        <taxon>Gammaproteobacteria</taxon>
        <taxon>Enterobacterales</taxon>
        <taxon>Enterobacteriaceae</taxon>
        <taxon>Salmonella</taxon>
    </lineage>
</organism>
<proteinExistence type="inferred from homology"/>
<sequence length="75" mass="8986">MARYFRRRKFCRFTAEGVQEIDYKDIATLKNYITESGKIVPSRITGTRAKYQRQLARAIKRARYLSLLPYTDRHQ</sequence>
<dbReference type="EMBL" id="AL513382">
    <property type="protein sequence ID" value="CAD06870.1"/>
    <property type="molecule type" value="Genomic_DNA"/>
</dbReference>
<dbReference type="EMBL" id="AE014613">
    <property type="protein sequence ID" value="AAO71891.1"/>
    <property type="molecule type" value="Genomic_DNA"/>
</dbReference>
<dbReference type="RefSeq" id="NP_458827.1">
    <property type="nucleotide sequence ID" value="NC_003198.1"/>
</dbReference>
<dbReference type="RefSeq" id="WP_000135199.1">
    <property type="nucleotide sequence ID" value="NZ_WSUR01000012.1"/>
</dbReference>
<dbReference type="SMR" id="P0A7U1"/>
<dbReference type="STRING" id="220341.gene:17588570"/>
<dbReference type="GeneID" id="98186237"/>
<dbReference type="KEGG" id="stt:t4444"/>
<dbReference type="KEGG" id="sty:STY4749"/>
<dbReference type="PATRIC" id="fig|220341.7.peg.4851"/>
<dbReference type="eggNOG" id="COG0238">
    <property type="taxonomic scope" value="Bacteria"/>
</dbReference>
<dbReference type="HOGENOM" id="CLU_148710_2_3_6"/>
<dbReference type="OMA" id="QKKYCRF"/>
<dbReference type="OrthoDB" id="9812008at2"/>
<dbReference type="Proteomes" id="UP000000541">
    <property type="component" value="Chromosome"/>
</dbReference>
<dbReference type="Proteomes" id="UP000002670">
    <property type="component" value="Chromosome"/>
</dbReference>
<dbReference type="GO" id="GO:0022627">
    <property type="term" value="C:cytosolic small ribosomal subunit"/>
    <property type="evidence" value="ECO:0007669"/>
    <property type="project" value="TreeGrafter"/>
</dbReference>
<dbReference type="GO" id="GO:0070181">
    <property type="term" value="F:small ribosomal subunit rRNA binding"/>
    <property type="evidence" value="ECO:0007669"/>
    <property type="project" value="TreeGrafter"/>
</dbReference>
<dbReference type="GO" id="GO:0003735">
    <property type="term" value="F:structural constituent of ribosome"/>
    <property type="evidence" value="ECO:0007669"/>
    <property type="project" value="InterPro"/>
</dbReference>
<dbReference type="GO" id="GO:0006412">
    <property type="term" value="P:translation"/>
    <property type="evidence" value="ECO:0007669"/>
    <property type="project" value="UniProtKB-UniRule"/>
</dbReference>
<dbReference type="FunFam" id="4.10.640.10:FF:000001">
    <property type="entry name" value="30S ribosomal protein S18"/>
    <property type="match status" value="1"/>
</dbReference>
<dbReference type="Gene3D" id="4.10.640.10">
    <property type="entry name" value="Ribosomal protein S18"/>
    <property type="match status" value="1"/>
</dbReference>
<dbReference type="HAMAP" id="MF_00270">
    <property type="entry name" value="Ribosomal_bS18"/>
    <property type="match status" value="1"/>
</dbReference>
<dbReference type="InterPro" id="IPR001648">
    <property type="entry name" value="Ribosomal_bS18"/>
</dbReference>
<dbReference type="InterPro" id="IPR018275">
    <property type="entry name" value="Ribosomal_bS18_CS"/>
</dbReference>
<dbReference type="InterPro" id="IPR036870">
    <property type="entry name" value="Ribosomal_bS18_sf"/>
</dbReference>
<dbReference type="NCBIfam" id="TIGR00165">
    <property type="entry name" value="S18"/>
    <property type="match status" value="1"/>
</dbReference>
<dbReference type="PANTHER" id="PTHR13479">
    <property type="entry name" value="30S RIBOSOMAL PROTEIN S18"/>
    <property type="match status" value="1"/>
</dbReference>
<dbReference type="PANTHER" id="PTHR13479:SF40">
    <property type="entry name" value="SMALL RIBOSOMAL SUBUNIT PROTEIN BS18M"/>
    <property type="match status" value="1"/>
</dbReference>
<dbReference type="Pfam" id="PF01084">
    <property type="entry name" value="Ribosomal_S18"/>
    <property type="match status" value="1"/>
</dbReference>
<dbReference type="PRINTS" id="PR00974">
    <property type="entry name" value="RIBOSOMALS18"/>
</dbReference>
<dbReference type="SUPFAM" id="SSF46911">
    <property type="entry name" value="Ribosomal protein S18"/>
    <property type="match status" value="1"/>
</dbReference>
<dbReference type="PROSITE" id="PS00057">
    <property type="entry name" value="RIBOSOMAL_S18"/>
    <property type="match status" value="1"/>
</dbReference>
<feature type="initiator methionine" description="Removed" evidence="1">
    <location>
        <position position="1"/>
    </location>
</feature>
<feature type="chain" id="PRO_0000111220" description="Small ribosomal subunit protein bS18">
    <location>
        <begin position="2"/>
        <end position="75"/>
    </location>
</feature>
<feature type="modified residue" description="N-acetylalanine" evidence="1">
    <location>
        <position position="2"/>
    </location>
</feature>
<gene>
    <name type="primary">rpsR</name>
    <name type="ordered locus">STY4749</name>
    <name type="ordered locus">t4444</name>
</gene>
<accession>P0A7U1</accession>
<accession>P02374</accession>